<dbReference type="EC" id="3.5.1.108" evidence="1"/>
<dbReference type="EMBL" id="CP001252">
    <property type="protein sequence ID" value="ACK44966.1"/>
    <property type="molecule type" value="Genomic_DNA"/>
</dbReference>
<dbReference type="RefSeq" id="WP_011845621.1">
    <property type="nucleotide sequence ID" value="NC_011663.1"/>
</dbReference>
<dbReference type="SMR" id="B8E6A3"/>
<dbReference type="GeneID" id="11774539"/>
<dbReference type="KEGG" id="sbp:Sbal223_0432"/>
<dbReference type="HOGENOM" id="CLU_046528_1_0_6"/>
<dbReference type="UniPathway" id="UPA00359">
    <property type="reaction ID" value="UER00478"/>
</dbReference>
<dbReference type="Proteomes" id="UP000002507">
    <property type="component" value="Chromosome"/>
</dbReference>
<dbReference type="GO" id="GO:0016020">
    <property type="term" value="C:membrane"/>
    <property type="evidence" value="ECO:0007669"/>
    <property type="project" value="GOC"/>
</dbReference>
<dbReference type="GO" id="GO:0046872">
    <property type="term" value="F:metal ion binding"/>
    <property type="evidence" value="ECO:0007669"/>
    <property type="project" value="UniProtKB-KW"/>
</dbReference>
<dbReference type="GO" id="GO:0103117">
    <property type="term" value="F:UDP-3-O-acyl-N-acetylglucosamine deacetylase activity"/>
    <property type="evidence" value="ECO:0007669"/>
    <property type="project" value="UniProtKB-UniRule"/>
</dbReference>
<dbReference type="GO" id="GO:0009245">
    <property type="term" value="P:lipid A biosynthetic process"/>
    <property type="evidence" value="ECO:0007669"/>
    <property type="project" value="UniProtKB-UniRule"/>
</dbReference>
<dbReference type="Gene3D" id="3.30.230.20">
    <property type="entry name" value="lpxc deacetylase, domain 1"/>
    <property type="match status" value="1"/>
</dbReference>
<dbReference type="Gene3D" id="3.30.1700.10">
    <property type="entry name" value="lpxc deacetylase, domain 2"/>
    <property type="match status" value="1"/>
</dbReference>
<dbReference type="HAMAP" id="MF_00388">
    <property type="entry name" value="LpxC"/>
    <property type="match status" value="1"/>
</dbReference>
<dbReference type="InterPro" id="IPR020568">
    <property type="entry name" value="Ribosomal_Su5_D2-typ_SF"/>
</dbReference>
<dbReference type="InterPro" id="IPR004463">
    <property type="entry name" value="UDP-acyl_GlcNac_deAcase"/>
</dbReference>
<dbReference type="InterPro" id="IPR011334">
    <property type="entry name" value="UDP-acyl_GlcNac_deAcase_C"/>
</dbReference>
<dbReference type="InterPro" id="IPR015870">
    <property type="entry name" value="UDP-acyl_N-AcGlcN_deAcase_N"/>
</dbReference>
<dbReference type="NCBIfam" id="TIGR00325">
    <property type="entry name" value="lpxC"/>
    <property type="match status" value="1"/>
</dbReference>
<dbReference type="PANTHER" id="PTHR33694">
    <property type="entry name" value="UDP-3-O-ACYL-N-ACETYLGLUCOSAMINE DEACETYLASE 1, MITOCHONDRIAL-RELATED"/>
    <property type="match status" value="1"/>
</dbReference>
<dbReference type="PANTHER" id="PTHR33694:SF1">
    <property type="entry name" value="UDP-3-O-ACYL-N-ACETYLGLUCOSAMINE DEACETYLASE 1, MITOCHONDRIAL-RELATED"/>
    <property type="match status" value="1"/>
</dbReference>
<dbReference type="Pfam" id="PF03331">
    <property type="entry name" value="LpxC"/>
    <property type="match status" value="1"/>
</dbReference>
<dbReference type="SUPFAM" id="SSF54211">
    <property type="entry name" value="Ribosomal protein S5 domain 2-like"/>
    <property type="match status" value="2"/>
</dbReference>
<evidence type="ECO:0000255" key="1">
    <source>
        <dbReference type="HAMAP-Rule" id="MF_00388"/>
    </source>
</evidence>
<accession>B8E6A3</accession>
<keyword id="KW-0378">Hydrolase</keyword>
<keyword id="KW-0441">Lipid A biosynthesis</keyword>
<keyword id="KW-0444">Lipid biosynthesis</keyword>
<keyword id="KW-0443">Lipid metabolism</keyword>
<keyword id="KW-0479">Metal-binding</keyword>
<keyword id="KW-0862">Zinc</keyword>
<name>LPXC_SHEB2</name>
<reference key="1">
    <citation type="submission" date="2008-12" db="EMBL/GenBank/DDBJ databases">
        <title>Complete sequence of chromosome of Shewanella baltica OS223.</title>
        <authorList>
            <consortium name="US DOE Joint Genome Institute"/>
            <person name="Lucas S."/>
            <person name="Copeland A."/>
            <person name="Lapidus A."/>
            <person name="Glavina del Rio T."/>
            <person name="Dalin E."/>
            <person name="Tice H."/>
            <person name="Bruce D."/>
            <person name="Goodwin L."/>
            <person name="Pitluck S."/>
            <person name="Chertkov O."/>
            <person name="Meincke L."/>
            <person name="Brettin T."/>
            <person name="Detter J.C."/>
            <person name="Han C."/>
            <person name="Kuske C.R."/>
            <person name="Larimer F."/>
            <person name="Land M."/>
            <person name="Hauser L."/>
            <person name="Kyrpides N."/>
            <person name="Ovchinnikova G."/>
            <person name="Brettar I."/>
            <person name="Rodrigues J."/>
            <person name="Konstantinidis K."/>
            <person name="Tiedje J."/>
        </authorList>
    </citation>
    <scope>NUCLEOTIDE SEQUENCE [LARGE SCALE GENOMIC DNA]</scope>
    <source>
        <strain>OS223</strain>
    </source>
</reference>
<comment type="function">
    <text evidence="1">Catalyzes the hydrolysis of UDP-3-O-myristoyl-N-acetylglucosamine to form UDP-3-O-myristoylglucosamine and acetate, the committed step in lipid A biosynthesis.</text>
</comment>
<comment type="catalytic activity">
    <reaction evidence="1">
        <text>a UDP-3-O-[(3R)-3-hydroxyacyl]-N-acetyl-alpha-D-glucosamine + H2O = a UDP-3-O-[(3R)-3-hydroxyacyl]-alpha-D-glucosamine + acetate</text>
        <dbReference type="Rhea" id="RHEA:67816"/>
        <dbReference type="ChEBI" id="CHEBI:15377"/>
        <dbReference type="ChEBI" id="CHEBI:30089"/>
        <dbReference type="ChEBI" id="CHEBI:137740"/>
        <dbReference type="ChEBI" id="CHEBI:173225"/>
        <dbReference type="EC" id="3.5.1.108"/>
    </reaction>
</comment>
<comment type="cofactor">
    <cofactor evidence="1">
        <name>Zn(2+)</name>
        <dbReference type="ChEBI" id="CHEBI:29105"/>
    </cofactor>
</comment>
<comment type="pathway">
    <text evidence="1">Glycolipid biosynthesis; lipid IV(A) biosynthesis; lipid IV(A) from (3R)-3-hydroxytetradecanoyl-[acyl-carrier-protein] and UDP-N-acetyl-alpha-D-glucosamine: step 2/6.</text>
</comment>
<comment type="similarity">
    <text evidence="1">Belongs to the LpxC family.</text>
</comment>
<sequence>MIFQRTVQKMVKTTGVGLHSGNKVTLSIMPAPVNSGIVLVRTDLSPAVAIPAKAEQVRETTMCTALVNDEGIRISTIEHLFAALAGLGIDNAVIEVDAPEIPIMDGSASPFVFLLQSAGIKEQAAPKKYLKIKRPVRVEDGDKWAELKPFKGFRVNFKIDFAHPEIARSQQHVVMDFSTSAFVKDISRARTFGFMRDIEYLRANNLALGGSMENAVVLDEYRVLNPDGLRYEDEFVKHKILDAFGDLYVAGHAILGEFTAYKTGHALNNQLVRALLAQQDAWELVSFEKEADVPVSFTVPGGAVFA</sequence>
<feature type="chain" id="PRO_1000134402" description="UDP-3-O-acyl-N-acetylglucosamine deacetylase">
    <location>
        <begin position="1"/>
        <end position="306"/>
    </location>
</feature>
<feature type="active site" description="Proton donor" evidence="1">
    <location>
        <position position="265"/>
    </location>
</feature>
<feature type="binding site" evidence="1">
    <location>
        <position position="79"/>
    </location>
    <ligand>
        <name>Zn(2+)</name>
        <dbReference type="ChEBI" id="CHEBI:29105"/>
    </ligand>
</feature>
<feature type="binding site" evidence="1">
    <location>
        <position position="238"/>
    </location>
    <ligand>
        <name>Zn(2+)</name>
        <dbReference type="ChEBI" id="CHEBI:29105"/>
    </ligand>
</feature>
<feature type="binding site" evidence="1">
    <location>
        <position position="242"/>
    </location>
    <ligand>
        <name>Zn(2+)</name>
        <dbReference type="ChEBI" id="CHEBI:29105"/>
    </ligand>
</feature>
<organism>
    <name type="scientific">Shewanella baltica (strain OS223)</name>
    <dbReference type="NCBI Taxonomy" id="407976"/>
    <lineage>
        <taxon>Bacteria</taxon>
        <taxon>Pseudomonadati</taxon>
        <taxon>Pseudomonadota</taxon>
        <taxon>Gammaproteobacteria</taxon>
        <taxon>Alteromonadales</taxon>
        <taxon>Shewanellaceae</taxon>
        <taxon>Shewanella</taxon>
    </lineage>
</organism>
<gene>
    <name evidence="1" type="primary">lpxC</name>
    <name type="ordered locus">Sbal223_0432</name>
</gene>
<protein>
    <recommendedName>
        <fullName evidence="1">UDP-3-O-acyl-N-acetylglucosamine deacetylase</fullName>
        <shortName evidence="1">UDP-3-O-acyl-GlcNAc deacetylase</shortName>
        <ecNumber evidence="1">3.5.1.108</ecNumber>
    </recommendedName>
    <alternativeName>
        <fullName evidence="1">UDP-3-O-[R-3-hydroxymyristoyl]-N-acetylglucosamine deacetylase</fullName>
    </alternativeName>
</protein>
<proteinExistence type="inferred from homology"/>